<gene>
    <name evidence="1" type="primary">cynS</name>
    <name type="ordered locus">AM1_5165</name>
</gene>
<name>CYNS_ACAM1</name>
<feature type="chain" id="PRO_1000146484" description="Cyanate hydratase">
    <location>
        <begin position="1"/>
        <end position="147"/>
    </location>
</feature>
<feature type="active site" evidence="1">
    <location>
        <position position="88"/>
    </location>
</feature>
<feature type="active site" evidence="1">
    <location>
        <position position="91"/>
    </location>
</feature>
<feature type="active site" evidence="1">
    <location>
        <position position="114"/>
    </location>
</feature>
<keyword id="KW-0456">Lyase</keyword>
<keyword id="KW-1185">Reference proteome</keyword>
<accession>B0C8H2</accession>
<proteinExistence type="inferred from homology"/>
<sequence>MAIAEITEKLLAAKKAKGISFEDLEKIVGCDETWIASVIYRQASASTEEAEKIVTALGLPAELAEPLTVPPMKGSLEPVIPTDPLVYRFYEIMQVYGVPVKAVIHEKFGDGIMSAIDFSIEVDKVPDPKGDRVQVTMCGKFLPYKKW</sequence>
<protein>
    <recommendedName>
        <fullName evidence="1">Cyanate hydratase</fullName>
        <shortName evidence="1">Cyanase</shortName>
        <ecNumber evidence="1">4.2.1.104</ecNumber>
    </recommendedName>
    <alternativeName>
        <fullName evidence="1">Cyanate hydrolase</fullName>
    </alternativeName>
    <alternativeName>
        <fullName evidence="1">Cyanate lyase</fullName>
    </alternativeName>
</protein>
<evidence type="ECO:0000255" key="1">
    <source>
        <dbReference type="HAMAP-Rule" id="MF_00535"/>
    </source>
</evidence>
<reference key="1">
    <citation type="journal article" date="2008" name="Proc. Natl. Acad. Sci. U.S.A.">
        <title>Niche adaptation and genome expansion in the chlorophyll d-producing cyanobacterium Acaryochloris marina.</title>
        <authorList>
            <person name="Swingley W.D."/>
            <person name="Chen M."/>
            <person name="Cheung P.C."/>
            <person name="Conrad A.L."/>
            <person name="Dejesa L.C."/>
            <person name="Hao J."/>
            <person name="Honchak B.M."/>
            <person name="Karbach L.E."/>
            <person name="Kurdoglu A."/>
            <person name="Lahiri S."/>
            <person name="Mastrian S.D."/>
            <person name="Miyashita H."/>
            <person name="Page L."/>
            <person name="Ramakrishna P."/>
            <person name="Satoh S."/>
            <person name="Sattley W.M."/>
            <person name="Shimada Y."/>
            <person name="Taylor H.L."/>
            <person name="Tomo T."/>
            <person name="Tsuchiya T."/>
            <person name="Wang Z.T."/>
            <person name="Raymond J."/>
            <person name="Mimuro M."/>
            <person name="Blankenship R.E."/>
            <person name="Touchman J.W."/>
        </authorList>
    </citation>
    <scope>NUCLEOTIDE SEQUENCE [LARGE SCALE GENOMIC DNA]</scope>
    <source>
        <strain>MBIC 11017</strain>
    </source>
</reference>
<dbReference type="EC" id="4.2.1.104" evidence="1"/>
<dbReference type="EMBL" id="CP000828">
    <property type="protein sequence ID" value="ABW30127.1"/>
    <property type="molecule type" value="Genomic_DNA"/>
</dbReference>
<dbReference type="RefSeq" id="WP_012165389.1">
    <property type="nucleotide sequence ID" value="NC_009925.1"/>
</dbReference>
<dbReference type="SMR" id="B0C8H2"/>
<dbReference type="STRING" id="329726.AM1_5165"/>
<dbReference type="KEGG" id="amr:AM1_5165"/>
<dbReference type="eggNOG" id="COG1513">
    <property type="taxonomic scope" value="Bacteria"/>
</dbReference>
<dbReference type="HOGENOM" id="CLU_103452_1_0_3"/>
<dbReference type="OrthoDB" id="9785870at2"/>
<dbReference type="Proteomes" id="UP000000268">
    <property type="component" value="Chromosome"/>
</dbReference>
<dbReference type="GO" id="GO:0008824">
    <property type="term" value="F:cyanate hydratase activity"/>
    <property type="evidence" value="ECO:0007669"/>
    <property type="project" value="UniProtKB-UniRule"/>
</dbReference>
<dbReference type="GO" id="GO:0003677">
    <property type="term" value="F:DNA binding"/>
    <property type="evidence" value="ECO:0007669"/>
    <property type="project" value="InterPro"/>
</dbReference>
<dbReference type="GO" id="GO:0009439">
    <property type="term" value="P:cyanate metabolic process"/>
    <property type="evidence" value="ECO:0007669"/>
    <property type="project" value="UniProtKB-UniRule"/>
</dbReference>
<dbReference type="CDD" id="cd00559">
    <property type="entry name" value="Cyanase_C"/>
    <property type="match status" value="1"/>
</dbReference>
<dbReference type="CDD" id="cd00093">
    <property type="entry name" value="HTH_XRE"/>
    <property type="match status" value="1"/>
</dbReference>
<dbReference type="Gene3D" id="3.30.1160.10">
    <property type="entry name" value="Cyanate lyase, C-terminal domain"/>
    <property type="match status" value="1"/>
</dbReference>
<dbReference type="Gene3D" id="1.10.260.40">
    <property type="entry name" value="lambda repressor-like DNA-binding domains"/>
    <property type="match status" value="1"/>
</dbReference>
<dbReference type="HAMAP" id="MF_00535">
    <property type="entry name" value="Cyanate_hydrat"/>
    <property type="match status" value="1"/>
</dbReference>
<dbReference type="InterPro" id="IPR001387">
    <property type="entry name" value="Cro/C1-type_HTH"/>
</dbReference>
<dbReference type="InterPro" id="IPR008076">
    <property type="entry name" value="Cyanase"/>
</dbReference>
<dbReference type="InterPro" id="IPR003712">
    <property type="entry name" value="Cyanate_lyase_C"/>
</dbReference>
<dbReference type="InterPro" id="IPR036581">
    <property type="entry name" value="Cyanate_lyase_C_sf"/>
</dbReference>
<dbReference type="InterPro" id="IPR048564">
    <property type="entry name" value="CYNS_N"/>
</dbReference>
<dbReference type="InterPro" id="IPR010982">
    <property type="entry name" value="Lambda_DNA-bd_dom_sf"/>
</dbReference>
<dbReference type="NCBIfam" id="TIGR00673">
    <property type="entry name" value="cynS"/>
    <property type="match status" value="1"/>
</dbReference>
<dbReference type="NCBIfam" id="NF002773">
    <property type="entry name" value="PRK02866.1"/>
    <property type="match status" value="1"/>
</dbReference>
<dbReference type="PANTHER" id="PTHR34186">
    <property type="entry name" value="CYANATE HYDRATASE"/>
    <property type="match status" value="1"/>
</dbReference>
<dbReference type="PANTHER" id="PTHR34186:SF2">
    <property type="entry name" value="CYANATE HYDRATASE"/>
    <property type="match status" value="1"/>
</dbReference>
<dbReference type="Pfam" id="PF02560">
    <property type="entry name" value="Cyanate_lyase"/>
    <property type="match status" value="1"/>
</dbReference>
<dbReference type="Pfam" id="PF21291">
    <property type="entry name" value="CYNS_N"/>
    <property type="match status" value="1"/>
</dbReference>
<dbReference type="PIRSF" id="PIRSF001263">
    <property type="entry name" value="Cyanate_hydratas"/>
    <property type="match status" value="1"/>
</dbReference>
<dbReference type="PRINTS" id="PR01693">
    <property type="entry name" value="CYANASE"/>
</dbReference>
<dbReference type="SMART" id="SM01116">
    <property type="entry name" value="Cyanate_lyase"/>
    <property type="match status" value="1"/>
</dbReference>
<dbReference type="SUPFAM" id="SSF55234">
    <property type="entry name" value="Cyanase C-terminal domain"/>
    <property type="match status" value="1"/>
</dbReference>
<dbReference type="SUPFAM" id="SSF47413">
    <property type="entry name" value="lambda repressor-like DNA-binding domains"/>
    <property type="match status" value="1"/>
</dbReference>
<organism>
    <name type="scientific">Acaryochloris marina (strain MBIC 11017)</name>
    <dbReference type="NCBI Taxonomy" id="329726"/>
    <lineage>
        <taxon>Bacteria</taxon>
        <taxon>Bacillati</taxon>
        <taxon>Cyanobacteriota</taxon>
        <taxon>Cyanophyceae</taxon>
        <taxon>Acaryochloridales</taxon>
        <taxon>Acaryochloridaceae</taxon>
        <taxon>Acaryochloris</taxon>
    </lineage>
</organism>
<comment type="function">
    <text evidence="1">Catalyzes the reaction of cyanate with bicarbonate to produce ammonia and carbon dioxide.</text>
</comment>
<comment type="catalytic activity">
    <reaction evidence="1">
        <text>cyanate + hydrogencarbonate + 3 H(+) = NH4(+) + 2 CO2</text>
        <dbReference type="Rhea" id="RHEA:11120"/>
        <dbReference type="ChEBI" id="CHEBI:15378"/>
        <dbReference type="ChEBI" id="CHEBI:16526"/>
        <dbReference type="ChEBI" id="CHEBI:17544"/>
        <dbReference type="ChEBI" id="CHEBI:28938"/>
        <dbReference type="ChEBI" id="CHEBI:29195"/>
        <dbReference type="EC" id="4.2.1.104"/>
    </reaction>
</comment>
<comment type="similarity">
    <text evidence="1">Belongs to the cyanase family.</text>
</comment>